<feature type="chain" id="PRO_0000317835" description="Probable cysteine protease atg4">
    <location>
        <begin position="1"/>
        <end position="439"/>
    </location>
</feature>
<feature type="region of interest" description="Disordered" evidence="3">
    <location>
        <begin position="48"/>
        <end position="92"/>
    </location>
</feature>
<feature type="compositionally biased region" description="Polar residues" evidence="3">
    <location>
        <begin position="64"/>
        <end position="75"/>
    </location>
</feature>
<feature type="compositionally biased region" description="Low complexity" evidence="3">
    <location>
        <begin position="76"/>
        <end position="87"/>
    </location>
</feature>
<feature type="active site" description="Nucleophile" evidence="2">
    <location>
        <position position="158"/>
    </location>
</feature>
<feature type="active site" evidence="2">
    <location>
        <position position="332"/>
    </location>
</feature>
<feature type="active site" evidence="2">
    <location>
        <position position="334"/>
    </location>
</feature>
<gene>
    <name type="primary">atg4</name>
    <name type="ORF">BC1G_11320</name>
    <name type="ORF">BCIN_02g06770</name>
</gene>
<comment type="function">
    <text evidence="1">Cysteine protease that plays a key role in cytoplasm to vacuole transport (Cvt) and autophagy by mediating both proteolytic activation and delipidation of ATG8. Required for selective autophagic degradation of the nucleus (nucleophagy) as well as for mitophagy which contributes to regulate mitochondrial quantity and quality by eliminating the mitochondria to a basal level to fulfill cellular energy requirements and preventing excess ROS production. The protease activity is required for proteolytic activation of ATG8: cleaves the C-terminal amino acid of ATG8 to reveal a C-terminal glycine. ATG8 ubiquitin-like activity requires the exposure of the glycine at the C-terminus for its conjugation to phosphatidylethanolamine (PE) and its insertion to membranes, which is necessary for autophagy. The ATG8-PE conjugate mediates tethering between adjacent membranes and stimulates membrane hemifusion, leading to expansion of the autophagosomal membrane during autophagy. In addition to the protease activity, also catalyzes deconjugation of PE-conjugated forms of ATG8 during macroautophagy: ATG8 delipidation is required to release the protein from membranes, which facilitates multiple events during macroautophagy, and especially for efficient autophagosome biogenesis, the assembly of ATG9-containing tubulovesicular clusters into phagophores/autophagosomes, and for the disassembly of PAS-associated ATG components. ATG8 delipidation by ATG4 also recycles ATG8-PE generated on inappropriate membranes to maintain a reservoir of unlipidated ATG8 that is required for autophagosome formation at the PAS.</text>
</comment>
<comment type="catalytic activity">
    <reaction evidence="1">
        <text>[protein]-C-terminal L-amino acid-glycyl-phosphatidylethanolamide + H2O = [protein]-C-terminal L-amino acid-glycine + a 1,2-diacyl-sn-glycero-3-phosphoethanolamine</text>
        <dbReference type="Rhea" id="RHEA:67548"/>
        <dbReference type="Rhea" id="RHEA-COMP:17323"/>
        <dbReference type="Rhea" id="RHEA-COMP:17324"/>
        <dbReference type="ChEBI" id="CHEBI:15377"/>
        <dbReference type="ChEBI" id="CHEBI:64612"/>
        <dbReference type="ChEBI" id="CHEBI:172940"/>
        <dbReference type="ChEBI" id="CHEBI:172941"/>
    </reaction>
    <physiologicalReaction direction="left-to-right" evidence="1">
        <dbReference type="Rhea" id="RHEA:67549"/>
    </physiologicalReaction>
</comment>
<comment type="subcellular location">
    <subcellularLocation>
        <location evidence="1">Cytoplasm</location>
    </subcellularLocation>
    <subcellularLocation>
        <location evidence="1">Nucleus</location>
    </subcellularLocation>
    <subcellularLocation>
        <location evidence="1">Preautophagosomal structure</location>
    </subcellularLocation>
</comment>
<comment type="similarity">
    <text evidence="4">Belongs to the peptidase C54 family.</text>
</comment>
<proteinExistence type="inferred from homology"/>
<dbReference type="EC" id="3.4.22.-"/>
<dbReference type="EMBL" id="CP009806">
    <property type="protein sequence ID" value="ATZ47391.1"/>
    <property type="molecule type" value="Genomic_DNA"/>
</dbReference>
<dbReference type="RefSeq" id="XP_001550547.1">
    <property type="nucleotide sequence ID" value="XM_001550497.1"/>
</dbReference>
<dbReference type="SMR" id="A6SDQ3"/>
<dbReference type="MEROPS" id="C54.001"/>
<dbReference type="EnsemblFungi" id="Bcin02g06770.1">
    <property type="protein sequence ID" value="Bcin02p06770.1"/>
    <property type="gene ID" value="Bcin02g06770"/>
</dbReference>
<dbReference type="GeneID" id="5431059"/>
<dbReference type="KEGG" id="bfu:BCIN_02g06770"/>
<dbReference type="VEuPathDB" id="FungiDB:Bcin02g06770"/>
<dbReference type="OMA" id="TGFGCMI"/>
<dbReference type="OrthoDB" id="2960936at2759"/>
<dbReference type="PHI-base" id="PHI:8451"/>
<dbReference type="Proteomes" id="UP000001798">
    <property type="component" value="Chromosome bcin02"/>
</dbReference>
<dbReference type="GO" id="GO:0005829">
    <property type="term" value="C:cytosol"/>
    <property type="evidence" value="ECO:0007669"/>
    <property type="project" value="EnsemblFungi"/>
</dbReference>
<dbReference type="GO" id="GO:0005739">
    <property type="term" value="C:mitochondrion"/>
    <property type="evidence" value="ECO:0007669"/>
    <property type="project" value="EnsemblFungi"/>
</dbReference>
<dbReference type="GO" id="GO:0005634">
    <property type="term" value="C:nucleus"/>
    <property type="evidence" value="ECO:0007669"/>
    <property type="project" value="UniProtKB-SubCell"/>
</dbReference>
<dbReference type="GO" id="GO:0000407">
    <property type="term" value="C:phagophore assembly site"/>
    <property type="evidence" value="ECO:0007669"/>
    <property type="project" value="UniProtKB-SubCell"/>
</dbReference>
<dbReference type="GO" id="GO:0004197">
    <property type="term" value="F:cysteine-type endopeptidase activity"/>
    <property type="evidence" value="ECO:0007669"/>
    <property type="project" value="TreeGrafter"/>
</dbReference>
<dbReference type="GO" id="GO:0019786">
    <property type="term" value="F:protein-phosphatidylethanolamide deconjugating activity"/>
    <property type="evidence" value="ECO:0007669"/>
    <property type="project" value="EnsemblFungi"/>
</dbReference>
<dbReference type="GO" id="GO:0035973">
    <property type="term" value="P:aggrephagy"/>
    <property type="evidence" value="ECO:0007669"/>
    <property type="project" value="TreeGrafter"/>
</dbReference>
<dbReference type="GO" id="GO:0000045">
    <property type="term" value="P:autophagosome assembly"/>
    <property type="evidence" value="ECO:0007669"/>
    <property type="project" value="EnsemblFungi"/>
</dbReference>
<dbReference type="GO" id="GO:0000423">
    <property type="term" value="P:mitophagy"/>
    <property type="evidence" value="ECO:0007669"/>
    <property type="project" value="TreeGrafter"/>
</dbReference>
<dbReference type="GO" id="GO:0034727">
    <property type="term" value="P:piecemeal microautophagy of the nucleus"/>
    <property type="evidence" value="ECO:0007669"/>
    <property type="project" value="EnsemblFungi"/>
</dbReference>
<dbReference type="GO" id="GO:0016485">
    <property type="term" value="P:protein processing"/>
    <property type="evidence" value="ECO:0007669"/>
    <property type="project" value="TreeGrafter"/>
</dbReference>
<dbReference type="GO" id="GO:0006612">
    <property type="term" value="P:protein targeting to membrane"/>
    <property type="evidence" value="ECO:0007669"/>
    <property type="project" value="EnsemblFungi"/>
</dbReference>
<dbReference type="GO" id="GO:0015031">
    <property type="term" value="P:protein transport"/>
    <property type="evidence" value="ECO:0007669"/>
    <property type="project" value="UniProtKB-KW"/>
</dbReference>
<dbReference type="InterPro" id="IPR038765">
    <property type="entry name" value="Papain-like_cys_pep_sf"/>
</dbReference>
<dbReference type="InterPro" id="IPR005078">
    <property type="entry name" value="Peptidase_C54"/>
</dbReference>
<dbReference type="InterPro" id="IPR046792">
    <property type="entry name" value="Peptidase_C54_cat"/>
</dbReference>
<dbReference type="PANTHER" id="PTHR22624:SF49">
    <property type="entry name" value="CYSTEINE PROTEASE"/>
    <property type="match status" value="1"/>
</dbReference>
<dbReference type="PANTHER" id="PTHR22624">
    <property type="entry name" value="CYSTEINE PROTEASE ATG4"/>
    <property type="match status" value="1"/>
</dbReference>
<dbReference type="Pfam" id="PF03416">
    <property type="entry name" value="Peptidase_C54"/>
    <property type="match status" value="1"/>
</dbReference>
<dbReference type="SUPFAM" id="SSF54001">
    <property type="entry name" value="Cysteine proteinases"/>
    <property type="match status" value="1"/>
</dbReference>
<evidence type="ECO:0000250" key="1">
    <source>
        <dbReference type="UniProtKB" id="P53867"/>
    </source>
</evidence>
<evidence type="ECO:0000250" key="2">
    <source>
        <dbReference type="UniProtKB" id="Q9Y4P1"/>
    </source>
</evidence>
<evidence type="ECO:0000256" key="3">
    <source>
        <dbReference type="SAM" id="MobiDB-lite"/>
    </source>
</evidence>
<evidence type="ECO:0000305" key="4"/>
<name>ATG4_BOTFB</name>
<sequence length="439" mass="48742">MTAADLGRYKRFVQYFWDPEPTNDTASQSPIWCLGKEYPILEKSATSAITDSPPQEGHYLPAQSLPTNEVTTPPDSTVGSLESSSGSQNCDTANADGGWPSAFLDDFEAKIWLTYRSNFPAIAKSQDPKALSAMSLSVRLRSQLVDQGGFTSDTGWGCMIRSGQSLLANALLTLRMGREWRRGVSSNEERKILSLFADDPRAPYSIHKFVEHGASACGKHPGEWFGPSATARCIQALSNSQAKSELRVYITGDGSDVYEDKFMSIAKPNHSDFTPTLILVGTRLGLDKITPVYWEALKYSLQMPQSVGIAGGRPSSSHYFIGVQESDFFYLDPHQTRPALPYKDNVEDYTTEDIDSCHTRRLRRLHIKEMDPSMLIAFLIRDENDWNEWRRAVKEVQGKGVIHVADTDPASYGLGGERDGAIDEVETFDDDDDDTILDA</sequence>
<organism>
    <name type="scientific">Botryotinia fuckeliana (strain B05.10)</name>
    <name type="common">Noble rot fungus</name>
    <name type="synonym">Botrytis cinerea</name>
    <dbReference type="NCBI Taxonomy" id="332648"/>
    <lineage>
        <taxon>Eukaryota</taxon>
        <taxon>Fungi</taxon>
        <taxon>Dikarya</taxon>
        <taxon>Ascomycota</taxon>
        <taxon>Pezizomycotina</taxon>
        <taxon>Leotiomycetes</taxon>
        <taxon>Helotiales</taxon>
        <taxon>Sclerotiniaceae</taxon>
        <taxon>Botrytis</taxon>
    </lineage>
</organism>
<protein>
    <recommendedName>
        <fullName>Probable cysteine protease atg4</fullName>
        <ecNumber>3.4.22.-</ecNumber>
    </recommendedName>
    <alternativeName>
        <fullName>Autophagy-related protein 4</fullName>
    </alternativeName>
</protein>
<accession>A6SDQ3</accession>
<accession>A0A384JAB5</accession>
<keyword id="KW-0072">Autophagy</keyword>
<keyword id="KW-0963">Cytoplasm</keyword>
<keyword id="KW-0378">Hydrolase</keyword>
<keyword id="KW-0539">Nucleus</keyword>
<keyword id="KW-0645">Protease</keyword>
<keyword id="KW-0653">Protein transport</keyword>
<keyword id="KW-1185">Reference proteome</keyword>
<keyword id="KW-0788">Thiol protease</keyword>
<keyword id="KW-0813">Transport</keyword>
<reference key="1">
    <citation type="journal article" date="2011" name="PLoS Genet.">
        <title>Genomic analysis of the necrotrophic fungal pathogens Sclerotinia sclerotiorum and Botrytis cinerea.</title>
        <authorList>
            <person name="Amselem J."/>
            <person name="Cuomo C.A."/>
            <person name="van Kan J.A.L."/>
            <person name="Viaud M."/>
            <person name="Benito E.P."/>
            <person name="Couloux A."/>
            <person name="Coutinho P.M."/>
            <person name="de Vries R.P."/>
            <person name="Dyer P.S."/>
            <person name="Fillinger S."/>
            <person name="Fournier E."/>
            <person name="Gout L."/>
            <person name="Hahn M."/>
            <person name="Kohn L."/>
            <person name="Lapalu N."/>
            <person name="Plummer K.M."/>
            <person name="Pradier J.-M."/>
            <person name="Quevillon E."/>
            <person name="Sharon A."/>
            <person name="Simon A."/>
            <person name="ten Have A."/>
            <person name="Tudzynski B."/>
            <person name="Tudzynski P."/>
            <person name="Wincker P."/>
            <person name="Andrew M."/>
            <person name="Anthouard V."/>
            <person name="Beever R.E."/>
            <person name="Beffa R."/>
            <person name="Benoit I."/>
            <person name="Bouzid O."/>
            <person name="Brault B."/>
            <person name="Chen Z."/>
            <person name="Choquer M."/>
            <person name="Collemare J."/>
            <person name="Cotton P."/>
            <person name="Danchin E.G."/>
            <person name="Da Silva C."/>
            <person name="Gautier A."/>
            <person name="Giraud C."/>
            <person name="Giraud T."/>
            <person name="Gonzalez C."/>
            <person name="Grossetete S."/>
            <person name="Gueldener U."/>
            <person name="Henrissat B."/>
            <person name="Howlett B.J."/>
            <person name="Kodira C."/>
            <person name="Kretschmer M."/>
            <person name="Lappartient A."/>
            <person name="Leroch M."/>
            <person name="Levis C."/>
            <person name="Mauceli E."/>
            <person name="Neuveglise C."/>
            <person name="Oeser B."/>
            <person name="Pearson M."/>
            <person name="Poulain J."/>
            <person name="Poussereau N."/>
            <person name="Quesneville H."/>
            <person name="Rascle C."/>
            <person name="Schumacher J."/>
            <person name="Segurens B."/>
            <person name="Sexton A."/>
            <person name="Silva E."/>
            <person name="Sirven C."/>
            <person name="Soanes D.M."/>
            <person name="Talbot N.J."/>
            <person name="Templeton M."/>
            <person name="Yandava C."/>
            <person name="Yarden O."/>
            <person name="Zeng Q."/>
            <person name="Rollins J.A."/>
            <person name="Lebrun M.-H."/>
            <person name="Dickman M."/>
        </authorList>
    </citation>
    <scope>NUCLEOTIDE SEQUENCE [LARGE SCALE GENOMIC DNA]</scope>
    <source>
        <strain>B05.10</strain>
    </source>
</reference>
<reference key="2">
    <citation type="journal article" date="2012" name="Eukaryot. Cell">
        <title>Genome update of Botrytis cinerea strains B05.10 and T4.</title>
        <authorList>
            <person name="Staats M."/>
            <person name="van Kan J.A.L."/>
        </authorList>
    </citation>
    <scope>NUCLEOTIDE SEQUENCE [LARGE SCALE GENOMIC DNA]</scope>
    <scope>GENOME REANNOTATION</scope>
    <source>
        <strain>B05.10</strain>
    </source>
</reference>
<reference key="3">
    <citation type="journal article" date="2017" name="Mol. Plant Pathol.">
        <title>A gapless genome sequence of the fungus Botrytis cinerea.</title>
        <authorList>
            <person name="van Kan J.A.L."/>
            <person name="Stassen J.H.M."/>
            <person name="Mosbach A."/>
            <person name="van der Lee T.A.J."/>
            <person name="Faino L."/>
            <person name="Farmer A.D."/>
            <person name="Papasotiriou D.G."/>
            <person name="Zhou S."/>
            <person name="Seidl M.F."/>
            <person name="Cottam E."/>
            <person name="Edel D."/>
            <person name="Hahn M."/>
            <person name="Schwartz D.C."/>
            <person name="Dietrich R.A."/>
            <person name="Widdison S."/>
            <person name="Scalliet G."/>
        </authorList>
    </citation>
    <scope>NUCLEOTIDE SEQUENCE [LARGE SCALE GENOMIC DNA]</scope>
    <scope>GENOME REANNOTATION</scope>
    <source>
        <strain>B05.10</strain>
    </source>
</reference>